<name>LPXC_PARPJ</name>
<keyword id="KW-0378">Hydrolase</keyword>
<keyword id="KW-0441">Lipid A biosynthesis</keyword>
<keyword id="KW-0444">Lipid biosynthesis</keyword>
<keyword id="KW-0443">Lipid metabolism</keyword>
<keyword id="KW-0479">Metal-binding</keyword>
<keyword id="KW-0862">Zinc</keyword>
<sequence length="305" mass="33650">MLKQRTIKQIVKTVGIGLHSGRKVELTLRPAAPDTGIVFSRVDLATPVDIPASAMAIGDTRMASVLQKDGARVSTIEHLMSACAGLGIDNLYIDVTAEEIPIMDGSAGSFVFLIQSAGIEEQNAAKKFIKVTKPVEIRDGDKFARLDPYFGFKLKFTIDFRHPAVDKTGQALEVDFANTSYVREIARARTFGFAHEVEMMRELGLARGGSMDNAIVLDEYRILNNDGLRYDDEFVKHKMLDAIGDLYVIGHPLLAAYDAYKSGHGLNNALLRELLAHEDSYEIVTFDDTQKAPRGFAYETQTAFA</sequence>
<organism>
    <name type="scientific">Paraburkholderia phytofirmans (strain DSM 17436 / LMG 22146 / PsJN)</name>
    <name type="common">Burkholderia phytofirmans</name>
    <dbReference type="NCBI Taxonomy" id="398527"/>
    <lineage>
        <taxon>Bacteria</taxon>
        <taxon>Pseudomonadati</taxon>
        <taxon>Pseudomonadota</taxon>
        <taxon>Betaproteobacteria</taxon>
        <taxon>Burkholderiales</taxon>
        <taxon>Burkholderiaceae</taxon>
        <taxon>Paraburkholderia</taxon>
    </lineage>
</organism>
<evidence type="ECO:0000255" key="1">
    <source>
        <dbReference type="HAMAP-Rule" id="MF_00388"/>
    </source>
</evidence>
<accession>B2SYW8</accession>
<gene>
    <name evidence="1" type="primary">lpxC</name>
    <name type="ordered locus">Bphyt_3463</name>
</gene>
<reference key="1">
    <citation type="journal article" date="2011" name="J. Bacteriol.">
        <title>Complete genome sequence of the plant growth-promoting endophyte Burkholderia phytofirmans strain PsJN.</title>
        <authorList>
            <person name="Weilharter A."/>
            <person name="Mitter B."/>
            <person name="Shin M.V."/>
            <person name="Chain P.S."/>
            <person name="Nowak J."/>
            <person name="Sessitsch A."/>
        </authorList>
    </citation>
    <scope>NUCLEOTIDE SEQUENCE [LARGE SCALE GENOMIC DNA]</scope>
    <source>
        <strain>DSM 17436 / LMG 22146 / PsJN</strain>
    </source>
</reference>
<proteinExistence type="inferred from homology"/>
<feature type="chain" id="PRO_1000122770" description="UDP-3-O-acyl-N-acetylglucosamine deacetylase">
    <location>
        <begin position="1"/>
        <end position="305"/>
    </location>
</feature>
<feature type="active site" description="Proton donor" evidence="1">
    <location>
        <position position="264"/>
    </location>
</feature>
<feature type="binding site" evidence="1">
    <location>
        <position position="78"/>
    </location>
    <ligand>
        <name>Zn(2+)</name>
        <dbReference type="ChEBI" id="CHEBI:29105"/>
    </ligand>
</feature>
<feature type="binding site" evidence="1">
    <location>
        <position position="237"/>
    </location>
    <ligand>
        <name>Zn(2+)</name>
        <dbReference type="ChEBI" id="CHEBI:29105"/>
    </ligand>
</feature>
<feature type="binding site" evidence="1">
    <location>
        <position position="241"/>
    </location>
    <ligand>
        <name>Zn(2+)</name>
        <dbReference type="ChEBI" id="CHEBI:29105"/>
    </ligand>
</feature>
<comment type="function">
    <text evidence="1">Catalyzes the hydrolysis of UDP-3-O-myristoyl-N-acetylglucosamine to form UDP-3-O-myristoylglucosamine and acetate, the committed step in lipid A biosynthesis.</text>
</comment>
<comment type="catalytic activity">
    <reaction evidence="1">
        <text>a UDP-3-O-[(3R)-3-hydroxyacyl]-N-acetyl-alpha-D-glucosamine + H2O = a UDP-3-O-[(3R)-3-hydroxyacyl]-alpha-D-glucosamine + acetate</text>
        <dbReference type="Rhea" id="RHEA:67816"/>
        <dbReference type="ChEBI" id="CHEBI:15377"/>
        <dbReference type="ChEBI" id="CHEBI:30089"/>
        <dbReference type="ChEBI" id="CHEBI:137740"/>
        <dbReference type="ChEBI" id="CHEBI:173225"/>
        <dbReference type="EC" id="3.5.1.108"/>
    </reaction>
</comment>
<comment type="cofactor">
    <cofactor evidence="1">
        <name>Zn(2+)</name>
        <dbReference type="ChEBI" id="CHEBI:29105"/>
    </cofactor>
</comment>
<comment type="pathway">
    <text evidence="1">Glycolipid biosynthesis; lipid IV(A) biosynthesis; lipid IV(A) from (3R)-3-hydroxytetradecanoyl-[acyl-carrier-protein] and UDP-N-acetyl-alpha-D-glucosamine: step 2/6.</text>
</comment>
<comment type="similarity">
    <text evidence="1">Belongs to the LpxC family.</text>
</comment>
<dbReference type="EC" id="3.5.1.108" evidence="1"/>
<dbReference type="EMBL" id="CP001052">
    <property type="protein sequence ID" value="ACD17853.1"/>
    <property type="molecule type" value="Genomic_DNA"/>
</dbReference>
<dbReference type="RefSeq" id="WP_012434414.1">
    <property type="nucleotide sequence ID" value="NC_010681.1"/>
</dbReference>
<dbReference type="SMR" id="B2SYW8"/>
<dbReference type="STRING" id="398527.Bphyt_3463"/>
<dbReference type="KEGG" id="bpy:Bphyt_3463"/>
<dbReference type="eggNOG" id="COG0774">
    <property type="taxonomic scope" value="Bacteria"/>
</dbReference>
<dbReference type="HOGENOM" id="CLU_046528_1_0_4"/>
<dbReference type="OrthoDB" id="9802746at2"/>
<dbReference type="UniPathway" id="UPA00359">
    <property type="reaction ID" value="UER00478"/>
</dbReference>
<dbReference type="Proteomes" id="UP000001739">
    <property type="component" value="Chromosome 1"/>
</dbReference>
<dbReference type="GO" id="GO:0016020">
    <property type="term" value="C:membrane"/>
    <property type="evidence" value="ECO:0007669"/>
    <property type="project" value="GOC"/>
</dbReference>
<dbReference type="GO" id="GO:0046872">
    <property type="term" value="F:metal ion binding"/>
    <property type="evidence" value="ECO:0007669"/>
    <property type="project" value="UniProtKB-KW"/>
</dbReference>
<dbReference type="GO" id="GO:0103117">
    <property type="term" value="F:UDP-3-O-acyl-N-acetylglucosamine deacetylase activity"/>
    <property type="evidence" value="ECO:0007669"/>
    <property type="project" value="UniProtKB-UniRule"/>
</dbReference>
<dbReference type="GO" id="GO:0009245">
    <property type="term" value="P:lipid A biosynthetic process"/>
    <property type="evidence" value="ECO:0007669"/>
    <property type="project" value="UniProtKB-UniRule"/>
</dbReference>
<dbReference type="Gene3D" id="3.30.230.20">
    <property type="entry name" value="lpxc deacetylase, domain 1"/>
    <property type="match status" value="1"/>
</dbReference>
<dbReference type="Gene3D" id="3.30.1700.10">
    <property type="entry name" value="lpxc deacetylase, domain 2"/>
    <property type="match status" value="1"/>
</dbReference>
<dbReference type="HAMAP" id="MF_00388">
    <property type="entry name" value="LpxC"/>
    <property type="match status" value="1"/>
</dbReference>
<dbReference type="InterPro" id="IPR020568">
    <property type="entry name" value="Ribosomal_Su5_D2-typ_SF"/>
</dbReference>
<dbReference type="InterPro" id="IPR004463">
    <property type="entry name" value="UDP-acyl_GlcNac_deAcase"/>
</dbReference>
<dbReference type="InterPro" id="IPR011334">
    <property type="entry name" value="UDP-acyl_GlcNac_deAcase_C"/>
</dbReference>
<dbReference type="InterPro" id="IPR015870">
    <property type="entry name" value="UDP-acyl_N-AcGlcN_deAcase_N"/>
</dbReference>
<dbReference type="NCBIfam" id="TIGR00325">
    <property type="entry name" value="lpxC"/>
    <property type="match status" value="1"/>
</dbReference>
<dbReference type="PANTHER" id="PTHR33694">
    <property type="entry name" value="UDP-3-O-ACYL-N-ACETYLGLUCOSAMINE DEACETYLASE 1, MITOCHONDRIAL-RELATED"/>
    <property type="match status" value="1"/>
</dbReference>
<dbReference type="PANTHER" id="PTHR33694:SF1">
    <property type="entry name" value="UDP-3-O-ACYL-N-ACETYLGLUCOSAMINE DEACETYLASE 1, MITOCHONDRIAL-RELATED"/>
    <property type="match status" value="1"/>
</dbReference>
<dbReference type="Pfam" id="PF03331">
    <property type="entry name" value="LpxC"/>
    <property type="match status" value="1"/>
</dbReference>
<dbReference type="SUPFAM" id="SSF54211">
    <property type="entry name" value="Ribosomal protein S5 domain 2-like"/>
    <property type="match status" value="2"/>
</dbReference>
<protein>
    <recommendedName>
        <fullName evidence="1">UDP-3-O-acyl-N-acetylglucosamine deacetylase</fullName>
        <shortName evidence="1">UDP-3-O-acyl-GlcNAc deacetylase</shortName>
        <ecNumber evidence="1">3.5.1.108</ecNumber>
    </recommendedName>
    <alternativeName>
        <fullName evidence="1">UDP-3-O-[R-3-hydroxymyristoyl]-N-acetylglucosamine deacetylase</fullName>
    </alternativeName>
</protein>